<accession>A8Z4Z7</accession>
<gene>
    <name evidence="1" type="primary">fabZ</name>
    <name type="ordered locus">USA300HOU_2089</name>
</gene>
<feature type="chain" id="PRO_1000080455" description="3-hydroxyacyl-[acyl-carrier-protein] dehydratase FabZ">
    <location>
        <begin position="1"/>
        <end position="146"/>
    </location>
</feature>
<feature type="active site" evidence="1">
    <location>
        <position position="51"/>
    </location>
</feature>
<dbReference type="EC" id="4.2.1.59" evidence="1"/>
<dbReference type="EMBL" id="CP000730">
    <property type="protein sequence ID" value="ABX30086.1"/>
    <property type="molecule type" value="Genomic_DNA"/>
</dbReference>
<dbReference type="RefSeq" id="WP_000447678.1">
    <property type="nucleotide sequence ID" value="NC_010079.1"/>
</dbReference>
<dbReference type="SMR" id="A8Z4Z7"/>
<dbReference type="KEGG" id="sax:USA300HOU_2089"/>
<dbReference type="HOGENOM" id="CLU_078912_3_0_9"/>
<dbReference type="GO" id="GO:0005737">
    <property type="term" value="C:cytoplasm"/>
    <property type="evidence" value="ECO:0007669"/>
    <property type="project" value="UniProtKB-SubCell"/>
</dbReference>
<dbReference type="GO" id="GO:0016020">
    <property type="term" value="C:membrane"/>
    <property type="evidence" value="ECO:0007669"/>
    <property type="project" value="GOC"/>
</dbReference>
<dbReference type="GO" id="GO:0019171">
    <property type="term" value="F:(3R)-hydroxyacyl-[acyl-carrier-protein] dehydratase activity"/>
    <property type="evidence" value="ECO:0007669"/>
    <property type="project" value="UniProtKB-EC"/>
</dbReference>
<dbReference type="GO" id="GO:0006633">
    <property type="term" value="P:fatty acid biosynthetic process"/>
    <property type="evidence" value="ECO:0007669"/>
    <property type="project" value="UniProtKB-UniRule"/>
</dbReference>
<dbReference type="GO" id="GO:0009245">
    <property type="term" value="P:lipid A biosynthetic process"/>
    <property type="evidence" value="ECO:0007669"/>
    <property type="project" value="UniProtKB-UniRule"/>
</dbReference>
<dbReference type="CDD" id="cd01288">
    <property type="entry name" value="FabZ"/>
    <property type="match status" value="1"/>
</dbReference>
<dbReference type="FunFam" id="3.10.129.10:FF:000001">
    <property type="entry name" value="3-hydroxyacyl-[acyl-carrier-protein] dehydratase FabZ"/>
    <property type="match status" value="1"/>
</dbReference>
<dbReference type="Gene3D" id="3.10.129.10">
    <property type="entry name" value="Hotdog Thioesterase"/>
    <property type="match status" value="1"/>
</dbReference>
<dbReference type="HAMAP" id="MF_00406">
    <property type="entry name" value="FabZ"/>
    <property type="match status" value="1"/>
</dbReference>
<dbReference type="InterPro" id="IPR013114">
    <property type="entry name" value="FabA_FabZ"/>
</dbReference>
<dbReference type="InterPro" id="IPR010084">
    <property type="entry name" value="FabZ"/>
</dbReference>
<dbReference type="InterPro" id="IPR029069">
    <property type="entry name" value="HotDog_dom_sf"/>
</dbReference>
<dbReference type="NCBIfam" id="TIGR01750">
    <property type="entry name" value="fabZ"/>
    <property type="match status" value="1"/>
</dbReference>
<dbReference type="NCBIfam" id="NF000582">
    <property type="entry name" value="PRK00006.1"/>
    <property type="match status" value="1"/>
</dbReference>
<dbReference type="PANTHER" id="PTHR30272">
    <property type="entry name" value="3-HYDROXYACYL-[ACYL-CARRIER-PROTEIN] DEHYDRATASE"/>
    <property type="match status" value="1"/>
</dbReference>
<dbReference type="PANTHER" id="PTHR30272:SF1">
    <property type="entry name" value="3-HYDROXYACYL-[ACYL-CARRIER-PROTEIN] DEHYDRATASE"/>
    <property type="match status" value="1"/>
</dbReference>
<dbReference type="Pfam" id="PF07977">
    <property type="entry name" value="FabA"/>
    <property type="match status" value="1"/>
</dbReference>
<dbReference type="SUPFAM" id="SSF54637">
    <property type="entry name" value="Thioesterase/thiol ester dehydrase-isomerase"/>
    <property type="match status" value="1"/>
</dbReference>
<name>FABZ_STAAT</name>
<evidence type="ECO:0000255" key="1">
    <source>
        <dbReference type="HAMAP-Rule" id="MF_00406"/>
    </source>
</evidence>
<reference key="1">
    <citation type="journal article" date="2007" name="BMC Microbiol.">
        <title>Subtle genetic changes enhance virulence of methicillin resistant and sensitive Staphylococcus aureus.</title>
        <authorList>
            <person name="Highlander S.K."/>
            <person name="Hulten K.G."/>
            <person name="Qin X."/>
            <person name="Jiang H."/>
            <person name="Yerrapragada S."/>
            <person name="Mason E.O. Jr."/>
            <person name="Shang Y."/>
            <person name="Williams T.M."/>
            <person name="Fortunov R.M."/>
            <person name="Liu Y."/>
            <person name="Igboeli O."/>
            <person name="Petrosino J."/>
            <person name="Tirumalai M."/>
            <person name="Uzman A."/>
            <person name="Fox G.E."/>
            <person name="Cardenas A.M."/>
            <person name="Muzny D.M."/>
            <person name="Hemphill L."/>
            <person name="Ding Y."/>
            <person name="Dugan S."/>
            <person name="Blyth P.R."/>
            <person name="Buhay C.J."/>
            <person name="Dinh H.H."/>
            <person name="Hawes A.C."/>
            <person name="Holder M."/>
            <person name="Kovar C.L."/>
            <person name="Lee S.L."/>
            <person name="Liu W."/>
            <person name="Nazareth L.V."/>
            <person name="Wang Q."/>
            <person name="Zhou J."/>
            <person name="Kaplan S.L."/>
            <person name="Weinstock G.M."/>
        </authorList>
    </citation>
    <scope>NUCLEOTIDE SEQUENCE [LARGE SCALE GENOMIC DNA]</scope>
    <source>
        <strain>USA300 / TCH1516</strain>
    </source>
</reference>
<sequence>METIFDYNQIKQIIPHRQPFLLIDKVVEYEEGQRCVAIKQVSGNEPFFQGHFPEYAVMPGVLITEALAQTGAVAILNSEENKGKIALFAGIDKCRFKRQVVPGDTLTLEVEITKIKGPIGKGNAKATVDGQLACSCELTFAIQDVK</sequence>
<protein>
    <recommendedName>
        <fullName evidence="1">3-hydroxyacyl-[acyl-carrier-protein] dehydratase FabZ</fullName>
        <ecNumber evidence="1">4.2.1.59</ecNumber>
    </recommendedName>
    <alternativeName>
        <fullName evidence="1">(3R)-hydroxymyristoyl-[acyl-carrier-protein] dehydratase</fullName>
        <shortName evidence="1">(3R)-hydroxymyristoyl-ACP dehydrase</shortName>
    </alternativeName>
    <alternativeName>
        <fullName evidence="1">Beta-hydroxyacyl-ACP dehydratase</fullName>
    </alternativeName>
</protein>
<comment type="function">
    <text evidence="1">Involved in unsaturated fatty acids biosynthesis. Catalyzes the dehydration of short chain beta-hydroxyacyl-ACPs and long chain saturated and unsaturated beta-hydroxyacyl-ACPs.</text>
</comment>
<comment type="catalytic activity">
    <reaction evidence="1">
        <text>a (3R)-hydroxyacyl-[ACP] = a (2E)-enoyl-[ACP] + H2O</text>
        <dbReference type="Rhea" id="RHEA:13097"/>
        <dbReference type="Rhea" id="RHEA-COMP:9925"/>
        <dbReference type="Rhea" id="RHEA-COMP:9945"/>
        <dbReference type="ChEBI" id="CHEBI:15377"/>
        <dbReference type="ChEBI" id="CHEBI:78784"/>
        <dbReference type="ChEBI" id="CHEBI:78827"/>
        <dbReference type="EC" id="4.2.1.59"/>
    </reaction>
</comment>
<comment type="subcellular location">
    <subcellularLocation>
        <location evidence="1">Cytoplasm</location>
    </subcellularLocation>
</comment>
<comment type="similarity">
    <text evidence="1">Belongs to the thioester dehydratase family. FabZ subfamily.</text>
</comment>
<organism>
    <name type="scientific">Staphylococcus aureus (strain USA300 / TCH1516)</name>
    <dbReference type="NCBI Taxonomy" id="451516"/>
    <lineage>
        <taxon>Bacteria</taxon>
        <taxon>Bacillati</taxon>
        <taxon>Bacillota</taxon>
        <taxon>Bacilli</taxon>
        <taxon>Bacillales</taxon>
        <taxon>Staphylococcaceae</taxon>
        <taxon>Staphylococcus</taxon>
    </lineage>
</organism>
<keyword id="KW-0963">Cytoplasm</keyword>
<keyword id="KW-0441">Lipid A biosynthesis</keyword>
<keyword id="KW-0444">Lipid biosynthesis</keyword>
<keyword id="KW-0443">Lipid metabolism</keyword>
<keyword id="KW-0456">Lyase</keyword>
<proteinExistence type="inferred from homology"/>